<proteinExistence type="inferred from homology"/>
<name>RS11_PROMT</name>
<accession>Q46IT1</accession>
<reference key="1">
    <citation type="journal article" date="2007" name="PLoS Genet.">
        <title>Patterns and implications of gene gain and loss in the evolution of Prochlorococcus.</title>
        <authorList>
            <person name="Kettler G.C."/>
            <person name="Martiny A.C."/>
            <person name="Huang K."/>
            <person name="Zucker J."/>
            <person name="Coleman M.L."/>
            <person name="Rodrigue S."/>
            <person name="Chen F."/>
            <person name="Lapidus A."/>
            <person name="Ferriera S."/>
            <person name="Johnson J."/>
            <person name="Steglich C."/>
            <person name="Church G.M."/>
            <person name="Richardson P."/>
            <person name="Chisholm S.W."/>
        </authorList>
    </citation>
    <scope>NUCLEOTIDE SEQUENCE [LARGE SCALE GENOMIC DNA]</scope>
    <source>
        <strain>NATL2A</strain>
    </source>
</reference>
<gene>
    <name evidence="1" type="primary">rpsK</name>
    <name evidence="1" type="synonym">rps11</name>
    <name type="ordered locus">PMN2A_1107</name>
</gene>
<organism>
    <name type="scientific">Prochlorococcus marinus (strain NATL2A)</name>
    <dbReference type="NCBI Taxonomy" id="59920"/>
    <lineage>
        <taxon>Bacteria</taxon>
        <taxon>Bacillati</taxon>
        <taxon>Cyanobacteriota</taxon>
        <taxon>Cyanophyceae</taxon>
        <taxon>Synechococcales</taxon>
        <taxon>Prochlorococcaceae</taxon>
        <taxon>Prochlorococcus</taxon>
    </lineage>
</organism>
<evidence type="ECO:0000255" key="1">
    <source>
        <dbReference type="HAMAP-Rule" id="MF_01310"/>
    </source>
</evidence>
<evidence type="ECO:0000305" key="2"/>
<protein>
    <recommendedName>
        <fullName evidence="1">Small ribosomal subunit protein uS11</fullName>
    </recommendedName>
    <alternativeName>
        <fullName evidence="2">30S ribosomal protein S11</fullName>
    </alternativeName>
</protein>
<feature type="chain" id="PRO_0000230417" description="Small ribosomal subunit protein uS11">
    <location>
        <begin position="1"/>
        <end position="130"/>
    </location>
</feature>
<keyword id="KW-1185">Reference proteome</keyword>
<keyword id="KW-0687">Ribonucleoprotein</keyword>
<keyword id="KW-0689">Ribosomal protein</keyword>
<keyword id="KW-0694">RNA-binding</keyword>
<keyword id="KW-0699">rRNA-binding</keyword>
<dbReference type="EMBL" id="CP000095">
    <property type="protein sequence ID" value="AAZ58597.1"/>
    <property type="molecule type" value="Genomic_DNA"/>
</dbReference>
<dbReference type="RefSeq" id="WP_011295451.1">
    <property type="nucleotide sequence ID" value="NC_007335.2"/>
</dbReference>
<dbReference type="SMR" id="Q46IT1"/>
<dbReference type="STRING" id="59920.PMN2A_1107"/>
<dbReference type="KEGG" id="pmn:PMN2A_1107"/>
<dbReference type="HOGENOM" id="CLU_072439_5_0_3"/>
<dbReference type="OrthoDB" id="9806415at2"/>
<dbReference type="PhylomeDB" id="Q46IT1"/>
<dbReference type="Proteomes" id="UP000002535">
    <property type="component" value="Chromosome"/>
</dbReference>
<dbReference type="GO" id="GO:1990904">
    <property type="term" value="C:ribonucleoprotein complex"/>
    <property type="evidence" value="ECO:0007669"/>
    <property type="project" value="UniProtKB-KW"/>
</dbReference>
<dbReference type="GO" id="GO:0005840">
    <property type="term" value="C:ribosome"/>
    <property type="evidence" value="ECO:0007669"/>
    <property type="project" value="UniProtKB-KW"/>
</dbReference>
<dbReference type="GO" id="GO:0019843">
    <property type="term" value="F:rRNA binding"/>
    <property type="evidence" value="ECO:0007669"/>
    <property type="project" value="UniProtKB-UniRule"/>
</dbReference>
<dbReference type="GO" id="GO:0003735">
    <property type="term" value="F:structural constituent of ribosome"/>
    <property type="evidence" value="ECO:0007669"/>
    <property type="project" value="InterPro"/>
</dbReference>
<dbReference type="GO" id="GO:0006412">
    <property type="term" value="P:translation"/>
    <property type="evidence" value="ECO:0007669"/>
    <property type="project" value="UniProtKB-UniRule"/>
</dbReference>
<dbReference type="FunFam" id="3.30.420.80:FF:000001">
    <property type="entry name" value="30S ribosomal protein S11"/>
    <property type="match status" value="1"/>
</dbReference>
<dbReference type="Gene3D" id="3.30.420.80">
    <property type="entry name" value="Ribosomal protein S11"/>
    <property type="match status" value="1"/>
</dbReference>
<dbReference type="HAMAP" id="MF_01310">
    <property type="entry name" value="Ribosomal_uS11"/>
    <property type="match status" value="1"/>
</dbReference>
<dbReference type="InterPro" id="IPR001971">
    <property type="entry name" value="Ribosomal_uS11"/>
</dbReference>
<dbReference type="InterPro" id="IPR019981">
    <property type="entry name" value="Ribosomal_uS11_bac-type"/>
</dbReference>
<dbReference type="InterPro" id="IPR018102">
    <property type="entry name" value="Ribosomal_uS11_CS"/>
</dbReference>
<dbReference type="InterPro" id="IPR036967">
    <property type="entry name" value="Ribosomal_uS11_sf"/>
</dbReference>
<dbReference type="NCBIfam" id="NF003698">
    <property type="entry name" value="PRK05309.1"/>
    <property type="match status" value="1"/>
</dbReference>
<dbReference type="NCBIfam" id="TIGR03632">
    <property type="entry name" value="uS11_bact"/>
    <property type="match status" value="1"/>
</dbReference>
<dbReference type="PANTHER" id="PTHR11759">
    <property type="entry name" value="40S RIBOSOMAL PROTEIN S14/30S RIBOSOMAL PROTEIN S11"/>
    <property type="match status" value="1"/>
</dbReference>
<dbReference type="Pfam" id="PF00411">
    <property type="entry name" value="Ribosomal_S11"/>
    <property type="match status" value="1"/>
</dbReference>
<dbReference type="PIRSF" id="PIRSF002131">
    <property type="entry name" value="Ribosomal_S11"/>
    <property type="match status" value="1"/>
</dbReference>
<dbReference type="SUPFAM" id="SSF53137">
    <property type="entry name" value="Translational machinery components"/>
    <property type="match status" value="1"/>
</dbReference>
<dbReference type="PROSITE" id="PS00054">
    <property type="entry name" value="RIBOSOMAL_S11"/>
    <property type="match status" value="1"/>
</dbReference>
<comment type="function">
    <text evidence="1">Located on the platform of the 30S subunit, it bridges several disparate RNA helices of the 16S rRNA. Forms part of the Shine-Dalgarno cleft in the 70S ribosome.</text>
</comment>
<comment type="subunit">
    <text evidence="1">Part of the 30S ribosomal subunit. Interacts with proteins S7 and S18. Binds to IF-3.</text>
</comment>
<comment type="similarity">
    <text evidence="1">Belongs to the universal ribosomal protein uS11 family.</text>
</comment>
<sequence>MATTSKKSGSKKSKRNVPNGVVHIQSTFNNTIVSITDTSGEVISWSSAGASGFKGARKGTPFAAQTAAELAARRALEQGMRQIEVLVRGPGSGRETAIRALQVAGLEITLIRDVTPLPHNGCRRPKRRRV</sequence>